<sequence>MALEVESAFSLSYLLKENKQTSNNLFSLIQVPYTKMTHAKGKKTHLLRCILGSPFETLTKSSIRRSLKNLREVCNLPYCNFKKIPKNISYKYQNPFLKLYEINNNFINCKVGATGNTNSTYDWRNLSTIGNGWSVTSYHNDSVSRLHVSMVNNIPNSNTKKLSWWVTRVRSKNPWKRPYKVIYQRDFRDDGIKPYVSEFILYAPKNRADLEMQSILLSSVECFQDIKYALNYWTNLKFKEICNSALKRFTQTNIIITPVKPRVVSVNKAREVSSSVEVKLQRYEREGEVFVVSKAGKEDTRVLNDDNAIRNLFNATLNGGKYKLHPEAKSATGKRFKYYKDGFCWLDVFADANRRIPEWVKPHCLLTGSVLMSCGLWDFAKRKMVSVSHGLLHYDRKLERSSARAGVRDFVGASNEAVQREDFRDLDLRVEEFAERVLETANLRSDNRLIDNILTRASDYINKKSKESKELDINVCLSMDEKKMITNLFPDIQMSFNQKSYSNHGVFNAMRACENFYFSRKFKNSDYIDAGGDVVSTLRSKNHNVHICSPRLDLKDAARHIQRATVIDGLKGYGETISFCTNKTEDCAVNRDIIIAVEVYDMTLRDMAKAMLSHGSRKFEFSCIIPPEIFTKECNVELYEGRLKVTRIGDNVEYYYGSNGETFSHSCQTLKDILSVQVFQFGGRVFKKTLEHSRGQLHFFSICICEKIEPGSVKLKTYYQRSELDKVTLRIPVKDSFGVVTHYIIKEDREFVSSMIEYVANTGIKIDDKMVEWTYSQYRAKKTVTIKSGKVTQKETRIRKELIPGFIAIIMSEGIRAREKTHYLAKMLYTSHYKPSIVNIIFRLIMHFLGGTKRFIYESLVDCLKFLTNSDYIDTIVNTESRIEDLDKWFVFEQNVTITTDAEDQPSILEQSVKTFLSKYSEDVYERGDRSEFELEEFSSEQDLVDQLLNSGGGSKEDEWFYSYIFSIVRTKCTLSLAWRWTNRIFNFITSCRAKGKDFVKYIYEIIKIIINKPWEALCHYLVQGYKTVLKIPMTCVDSVNYLKRKSLEKILSYFSHERADDEYIFPGYDSDFSEESGDYGDENTELDSRSRCTVIKSKVEMLFRNIKGHIEKFLQRCGIIDQYNKIYHWFKSILTDVDCFNSVLNFITHTGCDALLAVLTGHFSIASCALKFMTDVVIEKNLSEKHHTTTKLIAGNLTQCIYKLDFIHPIWIPIRWGVKEISKIHIKKKLLNWRSTKEVTNESICKDLVHKSYIKYFDIKKAVWLLWFSLLIIFLHPTLGFFILFSIYPAIEIKRYYNNVVCFNNIKMSYPHVIDRLGGTYNFAKLKKAVREKFSENKSQGVKISEIPAEKDEDVMPPLEEVETPKRSVGRPSSKQDDIEDECNIKEDPTESLNFSNIEATSNRYDTLRVGNSKLCKFLRFYPKSKCYANIQTGDLIRDSIEEFYHLERSKLDIEISKMQRVVEIMNDTGRMLDNVRRMIDDRSMYVTLDGVSWYRLGCKDKNPAKEDFKAIFDHNFNIMEGNAKVKEFAVSSDEWRGMYSNERCRAIEQLFNDNNEMVRRPDVNGLKFYNKPPGAGKTTTIAKLMSKDLKNKVKCLALSYTKVGRLELIDKLKKDGIEKPEKYVKTYDSFLMNNDNILEIVNLYCDEVFMMHAGHFLTLLTKIAYQNGYCYGDVNQIPFINRDPYTPAYLSREFFRKQDLNYDTYTYRCPLDTCYLLSNLKDEMGNIIYAGGVKNVNEVYPTIRSLNLFGINVVGEVPVEYNAKYLTFTQDEKLNLQRHIDSQGGCRNAVSTVNEAQGCTFSEVNLVRLVQFDNPVMSDINQFVVAISRHTTTFKYFTPHSRLNDRVSNAISSLQSVSDFVLKDYHFRQCL</sequence>
<feature type="chain" id="PRO_0000402507" description="Replicase polyprotein 1a">
    <location>
        <begin position="1"/>
        <end position="1873"/>
    </location>
</feature>
<feature type="chain" id="PRO_0000402508" description="Leader protease" evidence="1">
    <location>
        <begin position="1"/>
        <end position="413"/>
    </location>
</feature>
<feature type="chain" id="PRO_0000402509" description="Methyltransferase/helicase" evidence="1">
    <location>
        <begin position="414"/>
        <end position="1873"/>
    </location>
</feature>
<feature type="domain" description="Alphavirus-like MT" evidence="2">
    <location>
        <begin position="495"/>
        <end position="674"/>
    </location>
</feature>
<feature type="domain" description="(+)RNA virus helicase ATP-binding">
    <location>
        <begin position="1538"/>
        <end position="1705"/>
    </location>
</feature>
<feature type="domain" description="(+)RNA virus helicase C-terminal">
    <location>
        <begin position="1706"/>
        <end position="1873"/>
    </location>
</feature>
<feature type="region of interest" description="Disordered" evidence="3">
    <location>
        <begin position="1356"/>
        <end position="1381"/>
    </location>
</feature>
<feature type="active site" description="For leader protease activity" evidence="1">
    <location>
        <position position="344"/>
    </location>
</feature>
<feature type="active site" description="For leader protease activity" evidence="1">
    <location>
        <position position="393"/>
    </location>
</feature>
<feature type="site" description="Cleavage; by the leader protease" evidence="1">
    <location>
        <begin position="413"/>
        <end position="414"/>
    </location>
</feature>
<accession>Q83044</accession>
<comment type="catalytic activity">
    <reaction>
        <text>ATP + H2O = ADP + phosphate + H(+)</text>
        <dbReference type="Rhea" id="RHEA:13065"/>
        <dbReference type="ChEBI" id="CHEBI:15377"/>
        <dbReference type="ChEBI" id="CHEBI:15378"/>
        <dbReference type="ChEBI" id="CHEBI:30616"/>
        <dbReference type="ChEBI" id="CHEBI:43474"/>
        <dbReference type="ChEBI" id="CHEBI:456216"/>
        <dbReference type="EC" id="3.6.4.13"/>
    </reaction>
</comment>
<comment type="alternative products">
    <event type="ribosomal frameshifting"/>
    <isoform>
        <id>Q83044-1</id>
        <name>Replicase 1a</name>
        <sequence type="displayed"/>
    </isoform>
    <isoform>
        <id>Q83045-1</id>
        <name>Replicase 1ab</name>
        <sequence type="external"/>
    </isoform>
    <text>The replicase 1a is produced from conventional translation of the 1a ORF. The replicase 1ab is generated probably by a +1 ribosomal frameshifting mechanism occurring at the 1a-1b genes boundary.</text>
</comment>
<gene>
    <name type="ORF">ORF1a</name>
</gene>
<organismHost>
    <name type="scientific">Beta vulgaris</name>
    <name type="common">Sugar beet</name>
    <dbReference type="NCBI Taxonomy" id="161934"/>
</organismHost>
<organismHost>
    <name type="scientific">Citrullus lanatus</name>
    <name type="common">Watermelon</name>
    <name type="synonym">Citrullus vulgaris</name>
    <dbReference type="NCBI Taxonomy" id="3654"/>
</organismHost>
<organismHost>
    <name type="scientific">Cucumis melo</name>
    <name type="common">Muskmelon</name>
    <dbReference type="NCBI Taxonomy" id="3656"/>
</organismHost>
<organismHost>
    <name type="scientific">Cucurbita maxima</name>
    <name type="common">Pumpkin</name>
    <name type="synonym">Winter squash</name>
    <dbReference type="NCBI Taxonomy" id="3661"/>
</organismHost>
<organismHost>
    <name type="scientific">Cucurbita moschata</name>
    <name type="common">Winter crookneck squash</name>
    <name type="synonym">Cucurbita pepo var. moschata</name>
    <dbReference type="NCBI Taxonomy" id="3662"/>
</organismHost>
<organismHost>
    <name type="scientific">Cucurbita pepo</name>
    <name type="common">Vegetable marrow</name>
    <name type="synonym">Summer squash</name>
    <dbReference type="NCBI Taxonomy" id="3663"/>
</organismHost>
<organismHost>
    <name type="scientific">Daucus carota</name>
    <name type="common">Wild carrot</name>
    <dbReference type="NCBI Taxonomy" id="4039"/>
</organismHost>
<organismHost>
    <name type="scientific">Lactuca sativa</name>
    <name type="common">Garden lettuce</name>
    <dbReference type="NCBI Taxonomy" id="4236"/>
</organismHost>
<proteinExistence type="predicted"/>
<protein>
    <recommendedName>
        <fullName>Replicase polyprotein 1a</fullName>
    </recommendedName>
    <component>
        <recommendedName>
            <fullName>Leader protease</fullName>
            <shortName>L-PRO</shortName>
            <ecNumber>3.4.22.-</ecNumber>
        </recommendedName>
    </component>
    <component>
        <recommendedName>
            <fullName>Methyltransferase/helicase</fullName>
            <ecNumber>2.1.1.-</ecNumber>
            <ecNumber>3.6.4.13</ecNumber>
        </recommendedName>
    </component>
</protein>
<reference key="1">
    <citation type="journal article" date="1995" name="Virology">
        <title>Genome structure and phylogenetic analysis of lettuce infectious yellows virus, a whitefly-transmitted, bipartite closterovirus.</title>
        <authorList>
            <person name="Klaassen V.A."/>
            <person name="Boeshore M.L."/>
            <person name="Koonin E.V."/>
            <person name="Tian T."/>
            <person name="Falk B.W."/>
        </authorList>
    </citation>
    <scope>NUCLEOTIDE SEQUENCE [GENOMIC RNA]</scope>
</reference>
<keyword id="KW-0067">ATP-binding</keyword>
<keyword id="KW-0347">Helicase</keyword>
<keyword id="KW-0378">Hydrolase</keyword>
<keyword id="KW-0489">Methyltransferase</keyword>
<keyword id="KW-0547">Nucleotide-binding</keyword>
<keyword id="KW-0645">Protease</keyword>
<keyword id="KW-1185">Reference proteome</keyword>
<keyword id="KW-0688">Ribosomal frameshifting</keyword>
<keyword id="KW-0788">Thiol protease</keyword>
<keyword id="KW-0808">Transferase</keyword>
<evidence type="ECO:0000250" key="1"/>
<evidence type="ECO:0000255" key="2">
    <source>
        <dbReference type="PROSITE-ProRule" id="PRU01079"/>
    </source>
</evidence>
<evidence type="ECO:0000256" key="3">
    <source>
        <dbReference type="SAM" id="MobiDB-lite"/>
    </source>
</evidence>
<organism>
    <name type="scientific">Lettuce infectious yellows virus (isolate United States/92)</name>
    <name type="common">LIYV</name>
    <dbReference type="NCBI Taxonomy" id="651355"/>
    <lineage>
        <taxon>Viruses</taxon>
        <taxon>Riboviria</taxon>
        <taxon>Orthornavirae</taxon>
        <taxon>Kitrinoviricota</taxon>
        <taxon>Alsuviricetes</taxon>
        <taxon>Martellivirales</taxon>
        <taxon>Closteroviridae</taxon>
        <taxon>Crinivirus</taxon>
        <taxon>Lettuce infectious yellows virus</taxon>
    </lineage>
</organism>
<dbReference type="EC" id="3.4.22.-"/>
<dbReference type="EC" id="2.1.1.-"/>
<dbReference type="EC" id="3.6.4.13"/>
<dbReference type="EMBL" id="U15440">
    <property type="protein sequence ID" value="AAA61797.1"/>
    <property type="molecule type" value="Genomic_RNA"/>
</dbReference>
<dbReference type="SMR" id="Q83044"/>
<dbReference type="KEGG" id="vg:991073"/>
<dbReference type="Proteomes" id="UP000001099">
    <property type="component" value="Genome"/>
</dbReference>
<dbReference type="GO" id="GO:0005524">
    <property type="term" value="F:ATP binding"/>
    <property type="evidence" value="ECO:0007669"/>
    <property type="project" value="UniProtKB-KW"/>
</dbReference>
<dbReference type="GO" id="GO:0016887">
    <property type="term" value="F:ATP hydrolysis activity"/>
    <property type="evidence" value="ECO:0007669"/>
    <property type="project" value="RHEA"/>
</dbReference>
<dbReference type="GO" id="GO:0008234">
    <property type="term" value="F:cysteine-type peptidase activity"/>
    <property type="evidence" value="ECO:0007669"/>
    <property type="project" value="UniProtKB-KW"/>
</dbReference>
<dbReference type="GO" id="GO:0008174">
    <property type="term" value="F:mRNA methyltransferase activity"/>
    <property type="evidence" value="ECO:0007669"/>
    <property type="project" value="InterPro"/>
</dbReference>
<dbReference type="GO" id="GO:0003723">
    <property type="term" value="F:RNA binding"/>
    <property type="evidence" value="ECO:0007669"/>
    <property type="project" value="InterPro"/>
</dbReference>
<dbReference type="GO" id="GO:0003724">
    <property type="term" value="F:RNA helicase activity"/>
    <property type="evidence" value="ECO:0007669"/>
    <property type="project" value="UniProtKB-EC"/>
</dbReference>
<dbReference type="GO" id="GO:0032259">
    <property type="term" value="P:methylation"/>
    <property type="evidence" value="ECO:0007669"/>
    <property type="project" value="UniProtKB-KW"/>
</dbReference>
<dbReference type="GO" id="GO:0016556">
    <property type="term" value="P:mRNA modification"/>
    <property type="evidence" value="ECO:0007669"/>
    <property type="project" value="InterPro"/>
</dbReference>
<dbReference type="GO" id="GO:0006508">
    <property type="term" value="P:proteolysis"/>
    <property type="evidence" value="ECO:0007669"/>
    <property type="project" value="UniProtKB-KW"/>
</dbReference>
<dbReference type="GO" id="GO:0006396">
    <property type="term" value="P:RNA processing"/>
    <property type="evidence" value="ECO:0007669"/>
    <property type="project" value="InterPro"/>
</dbReference>
<dbReference type="GO" id="GO:0075523">
    <property type="term" value="P:viral translational frameshifting"/>
    <property type="evidence" value="ECO:0007669"/>
    <property type="project" value="UniProtKB-KW"/>
</dbReference>
<dbReference type="Gene3D" id="3.40.50.300">
    <property type="entry name" value="P-loop containing nucleotide triphosphate hydrolases"/>
    <property type="match status" value="2"/>
</dbReference>
<dbReference type="InterPro" id="IPR027351">
    <property type="entry name" value="(+)RNA_virus_helicase_core_dom"/>
</dbReference>
<dbReference type="InterPro" id="IPR002588">
    <property type="entry name" value="Alphavirus-like_MT_dom"/>
</dbReference>
<dbReference type="InterPro" id="IPR027417">
    <property type="entry name" value="P-loop_NTPase"/>
</dbReference>
<dbReference type="Pfam" id="PF01443">
    <property type="entry name" value="Viral_helicase1"/>
    <property type="match status" value="1"/>
</dbReference>
<dbReference type="Pfam" id="PF01660">
    <property type="entry name" value="Vmethyltransf"/>
    <property type="match status" value="1"/>
</dbReference>
<dbReference type="SUPFAM" id="SSF52540">
    <property type="entry name" value="P-loop containing nucleoside triphosphate hydrolases"/>
    <property type="match status" value="1"/>
</dbReference>
<dbReference type="PROSITE" id="PS51743">
    <property type="entry name" value="ALPHAVIRUS_MT"/>
    <property type="match status" value="1"/>
</dbReference>
<dbReference type="PROSITE" id="PS51657">
    <property type="entry name" value="PSRV_HELICASE"/>
    <property type="match status" value="1"/>
</dbReference>
<name>R1A_LIYV9</name>